<proteinExistence type="inferred from homology"/>
<feature type="chain" id="PRO_1000145341" description="ATP synthase subunit a">
    <location>
        <begin position="1"/>
        <end position="287"/>
    </location>
</feature>
<feature type="transmembrane region" description="Helical" evidence="1">
    <location>
        <begin position="38"/>
        <end position="58"/>
    </location>
</feature>
<feature type="transmembrane region" description="Helical" evidence="1">
    <location>
        <begin position="96"/>
        <end position="116"/>
    </location>
</feature>
<feature type="transmembrane region" description="Helical" evidence="1">
    <location>
        <begin position="139"/>
        <end position="161"/>
    </location>
</feature>
<feature type="transmembrane region" description="Helical" evidence="1">
    <location>
        <begin position="187"/>
        <end position="207"/>
    </location>
</feature>
<feature type="transmembrane region" description="Helical" evidence="1">
    <location>
        <begin position="225"/>
        <end position="245"/>
    </location>
</feature>
<feature type="transmembrane region" description="Helical" evidence="1">
    <location>
        <begin position="259"/>
        <end position="279"/>
    </location>
</feature>
<dbReference type="EMBL" id="CP000542">
    <property type="protein sequence ID" value="ABM56259.1"/>
    <property type="molecule type" value="Genomic_DNA"/>
</dbReference>
<dbReference type="RefSeq" id="WP_011808275.1">
    <property type="nucleotide sequence ID" value="NC_008786.1"/>
</dbReference>
<dbReference type="SMR" id="A1WF52"/>
<dbReference type="STRING" id="391735.Veis_0474"/>
<dbReference type="GeneID" id="76459184"/>
<dbReference type="KEGG" id="vei:Veis_0474"/>
<dbReference type="eggNOG" id="COG0356">
    <property type="taxonomic scope" value="Bacteria"/>
</dbReference>
<dbReference type="HOGENOM" id="CLU_041018_1_0_4"/>
<dbReference type="OrthoDB" id="9789241at2"/>
<dbReference type="Proteomes" id="UP000000374">
    <property type="component" value="Chromosome"/>
</dbReference>
<dbReference type="GO" id="GO:0005886">
    <property type="term" value="C:plasma membrane"/>
    <property type="evidence" value="ECO:0007669"/>
    <property type="project" value="UniProtKB-SubCell"/>
</dbReference>
<dbReference type="GO" id="GO:0045259">
    <property type="term" value="C:proton-transporting ATP synthase complex"/>
    <property type="evidence" value="ECO:0007669"/>
    <property type="project" value="UniProtKB-KW"/>
</dbReference>
<dbReference type="GO" id="GO:0046933">
    <property type="term" value="F:proton-transporting ATP synthase activity, rotational mechanism"/>
    <property type="evidence" value="ECO:0007669"/>
    <property type="project" value="UniProtKB-UniRule"/>
</dbReference>
<dbReference type="GO" id="GO:0042777">
    <property type="term" value="P:proton motive force-driven plasma membrane ATP synthesis"/>
    <property type="evidence" value="ECO:0007669"/>
    <property type="project" value="TreeGrafter"/>
</dbReference>
<dbReference type="CDD" id="cd00310">
    <property type="entry name" value="ATP-synt_Fo_a_6"/>
    <property type="match status" value="1"/>
</dbReference>
<dbReference type="FunFam" id="1.20.120.220:FF:000002">
    <property type="entry name" value="ATP synthase subunit a"/>
    <property type="match status" value="1"/>
</dbReference>
<dbReference type="Gene3D" id="1.20.120.220">
    <property type="entry name" value="ATP synthase, F0 complex, subunit A"/>
    <property type="match status" value="1"/>
</dbReference>
<dbReference type="HAMAP" id="MF_01393">
    <property type="entry name" value="ATP_synth_a_bact"/>
    <property type="match status" value="1"/>
</dbReference>
<dbReference type="InterPro" id="IPR045082">
    <property type="entry name" value="ATP_syn_F0_a_bact/chloroplast"/>
</dbReference>
<dbReference type="InterPro" id="IPR000568">
    <property type="entry name" value="ATP_synth_F0_asu"/>
</dbReference>
<dbReference type="InterPro" id="IPR023011">
    <property type="entry name" value="ATP_synth_F0_asu_AS"/>
</dbReference>
<dbReference type="InterPro" id="IPR035908">
    <property type="entry name" value="F0_ATP_A_sf"/>
</dbReference>
<dbReference type="NCBIfam" id="TIGR01131">
    <property type="entry name" value="ATP_synt_6_or_A"/>
    <property type="match status" value="1"/>
</dbReference>
<dbReference type="NCBIfam" id="NF004477">
    <property type="entry name" value="PRK05815.1-1"/>
    <property type="match status" value="1"/>
</dbReference>
<dbReference type="PANTHER" id="PTHR42823">
    <property type="entry name" value="ATP SYNTHASE SUBUNIT A, CHLOROPLASTIC"/>
    <property type="match status" value="1"/>
</dbReference>
<dbReference type="PANTHER" id="PTHR42823:SF3">
    <property type="entry name" value="ATP SYNTHASE SUBUNIT A, CHLOROPLASTIC"/>
    <property type="match status" value="1"/>
</dbReference>
<dbReference type="Pfam" id="PF00119">
    <property type="entry name" value="ATP-synt_A"/>
    <property type="match status" value="1"/>
</dbReference>
<dbReference type="SUPFAM" id="SSF81336">
    <property type="entry name" value="F1F0 ATP synthase subunit A"/>
    <property type="match status" value="1"/>
</dbReference>
<dbReference type="PROSITE" id="PS00449">
    <property type="entry name" value="ATPASE_A"/>
    <property type="match status" value="1"/>
</dbReference>
<gene>
    <name evidence="1" type="primary">atpB</name>
    <name type="ordered locus">Veis_0474</name>
</gene>
<keyword id="KW-0066">ATP synthesis</keyword>
<keyword id="KW-0997">Cell inner membrane</keyword>
<keyword id="KW-1003">Cell membrane</keyword>
<keyword id="KW-0138">CF(0)</keyword>
<keyword id="KW-0375">Hydrogen ion transport</keyword>
<keyword id="KW-0406">Ion transport</keyword>
<keyword id="KW-0472">Membrane</keyword>
<keyword id="KW-1185">Reference proteome</keyword>
<keyword id="KW-0812">Transmembrane</keyword>
<keyword id="KW-1133">Transmembrane helix</keyword>
<keyword id="KW-0813">Transport</keyword>
<name>ATP6_VEREI</name>
<protein>
    <recommendedName>
        <fullName evidence="1">ATP synthase subunit a</fullName>
    </recommendedName>
    <alternativeName>
        <fullName evidence="1">ATP synthase F0 sector subunit a</fullName>
    </alternativeName>
    <alternativeName>
        <fullName evidence="1">F-ATPase subunit 6</fullName>
    </alternativeName>
</protein>
<organism>
    <name type="scientific">Verminephrobacter eiseniae (strain EF01-2)</name>
    <dbReference type="NCBI Taxonomy" id="391735"/>
    <lineage>
        <taxon>Bacteria</taxon>
        <taxon>Pseudomonadati</taxon>
        <taxon>Pseudomonadota</taxon>
        <taxon>Betaproteobacteria</taxon>
        <taxon>Burkholderiales</taxon>
        <taxon>Comamonadaceae</taxon>
        <taxon>Verminephrobacter</taxon>
    </lineage>
</organism>
<accession>A1WF52</accession>
<comment type="function">
    <text evidence="1">Key component of the proton channel; it plays a direct role in the translocation of protons across the membrane.</text>
</comment>
<comment type="subunit">
    <text evidence="1">F-type ATPases have 2 components, CF(1) - the catalytic core - and CF(0) - the membrane proton channel. CF(1) has five subunits: alpha(3), beta(3), gamma(1), delta(1), epsilon(1). CF(0) has three main subunits: a(1), b(2) and c(9-12). The alpha and beta chains form an alternating ring which encloses part of the gamma chain. CF(1) is attached to CF(0) by a central stalk formed by the gamma and epsilon chains, while a peripheral stalk is formed by the delta and b chains.</text>
</comment>
<comment type="subcellular location">
    <subcellularLocation>
        <location evidence="1">Cell inner membrane</location>
        <topology evidence="1">Multi-pass membrane protein</topology>
    </subcellularLocation>
</comment>
<comment type="similarity">
    <text evidence="1">Belongs to the ATPase A chain family.</text>
</comment>
<sequence length="287" mass="31095">MAASAHAPTASEYIVHHLQHLQNVPQTKIVDFSVVNYDSMVLALLLGGLTLLILWTAARKASCGVPGRLQAAVEILVEMVDNQAKANIHNAESRKFIAPLGLVVFVWVFLMNAMDMVPVDLLPSIWGQIRQDSHEPLRVVPTADLSTTMGLALAVLGLRFWYSLKIKGAGGWAHELVSAPFGTSKNPLFALILGLVNLLMQVIEYVANTVSHGMRLFGNMYAGELVFMLIALMGGAAALSLSGVLLPVGHVIAGTLWTLFHILVITLQAFIFMMLALIYLGQAHNAH</sequence>
<evidence type="ECO:0000255" key="1">
    <source>
        <dbReference type="HAMAP-Rule" id="MF_01393"/>
    </source>
</evidence>
<reference key="1">
    <citation type="submission" date="2006-12" db="EMBL/GenBank/DDBJ databases">
        <title>Complete sequence of chromosome 1 of Verminephrobacter eiseniae EF01-2.</title>
        <authorList>
            <person name="Copeland A."/>
            <person name="Lucas S."/>
            <person name="Lapidus A."/>
            <person name="Barry K."/>
            <person name="Detter J.C."/>
            <person name="Glavina del Rio T."/>
            <person name="Dalin E."/>
            <person name="Tice H."/>
            <person name="Pitluck S."/>
            <person name="Chertkov O."/>
            <person name="Brettin T."/>
            <person name="Bruce D."/>
            <person name="Han C."/>
            <person name="Tapia R."/>
            <person name="Gilna P."/>
            <person name="Schmutz J."/>
            <person name="Larimer F."/>
            <person name="Land M."/>
            <person name="Hauser L."/>
            <person name="Kyrpides N."/>
            <person name="Kim E."/>
            <person name="Stahl D."/>
            <person name="Richardson P."/>
        </authorList>
    </citation>
    <scope>NUCLEOTIDE SEQUENCE [LARGE SCALE GENOMIC DNA]</scope>
    <source>
        <strain>EF01-2</strain>
    </source>
</reference>